<evidence type="ECO:0000255" key="1">
    <source>
        <dbReference type="HAMAP-Rule" id="MF_00048"/>
    </source>
</evidence>
<evidence type="ECO:0000256" key="2">
    <source>
        <dbReference type="SAM" id="MobiDB-lite"/>
    </source>
</evidence>
<feature type="chain" id="PRO_1000009217" description="UPF0102 protein YraN">
    <location>
        <begin position="1"/>
        <end position="131"/>
    </location>
</feature>
<feature type="region of interest" description="Disordered" evidence="2">
    <location>
        <begin position="1"/>
        <end position="21"/>
    </location>
</feature>
<feature type="compositionally biased region" description="Polar residues" evidence="2">
    <location>
        <begin position="1"/>
        <end position="19"/>
    </location>
</feature>
<gene>
    <name evidence="1" type="primary">yraN</name>
    <name type="ordered locus">UTI89_C3574</name>
</gene>
<organism>
    <name type="scientific">Escherichia coli (strain UTI89 / UPEC)</name>
    <dbReference type="NCBI Taxonomy" id="364106"/>
    <lineage>
        <taxon>Bacteria</taxon>
        <taxon>Pseudomonadati</taxon>
        <taxon>Pseudomonadota</taxon>
        <taxon>Gammaproteobacteria</taxon>
        <taxon>Enterobacterales</taxon>
        <taxon>Enterobacteriaceae</taxon>
        <taxon>Escherichia</taxon>
    </lineage>
</organism>
<reference key="1">
    <citation type="journal article" date="2006" name="Proc. Natl. Acad. Sci. U.S.A.">
        <title>Identification of genes subject to positive selection in uropathogenic strains of Escherichia coli: a comparative genomics approach.</title>
        <authorList>
            <person name="Chen S.L."/>
            <person name="Hung C.-S."/>
            <person name="Xu J."/>
            <person name="Reigstad C.S."/>
            <person name="Magrini V."/>
            <person name="Sabo A."/>
            <person name="Blasiar D."/>
            <person name="Bieri T."/>
            <person name="Meyer R.R."/>
            <person name="Ozersky P."/>
            <person name="Armstrong J.R."/>
            <person name="Fulton R.S."/>
            <person name="Latreille J.P."/>
            <person name="Spieth J."/>
            <person name="Hooton T.M."/>
            <person name="Mardis E.R."/>
            <person name="Hultgren S.J."/>
            <person name="Gordon J.I."/>
        </authorList>
    </citation>
    <scope>NUCLEOTIDE SEQUENCE [LARGE SCALE GENOMIC DNA]</scope>
    <source>
        <strain>UTI89 / UPEC</strain>
    </source>
</reference>
<protein>
    <recommendedName>
        <fullName evidence="1">UPF0102 protein YraN</fullName>
    </recommendedName>
</protein>
<name>YRAN_ECOUT</name>
<accession>Q1R6J4</accession>
<sequence length="131" mass="14798">MATVPTRSGSPRQLTTKQTGDAWEAQARRWLEGKGLRFIAANVNERGGEIDLIMREGRTTVFIEVRYRRSALYGGAAASVTRSKQHKLLQTARLWLARHNGSFDTVDCRFDVVAFTGNEVEWIKDAFNDHS</sequence>
<proteinExistence type="inferred from homology"/>
<dbReference type="EMBL" id="CP000243">
    <property type="protein sequence ID" value="ABE09020.1"/>
    <property type="molecule type" value="Genomic_DNA"/>
</dbReference>
<dbReference type="RefSeq" id="WP_000246833.1">
    <property type="nucleotide sequence ID" value="NZ_CP064825.1"/>
</dbReference>
<dbReference type="SMR" id="Q1R6J4"/>
<dbReference type="KEGG" id="eci:UTI89_C3574"/>
<dbReference type="HOGENOM" id="CLU_115353_1_0_6"/>
<dbReference type="Proteomes" id="UP000001952">
    <property type="component" value="Chromosome"/>
</dbReference>
<dbReference type="GO" id="GO:0003676">
    <property type="term" value="F:nucleic acid binding"/>
    <property type="evidence" value="ECO:0007669"/>
    <property type="project" value="InterPro"/>
</dbReference>
<dbReference type="CDD" id="cd20736">
    <property type="entry name" value="PoNe_Nuclease"/>
    <property type="match status" value="1"/>
</dbReference>
<dbReference type="Gene3D" id="3.40.1350.10">
    <property type="match status" value="1"/>
</dbReference>
<dbReference type="HAMAP" id="MF_00048">
    <property type="entry name" value="UPF0102"/>
    <property type="match status" value="1"/>
</dbReference>
<dbReference type="InterPro" id="IPR011335">
    <property type="entry name" value="Restrct_endonuc-II-like"/>
</dbReference>
<dbReference type="InterPro" id="IPR011856">
    <property type="entry name" value="tRNA_endonuc-like_dom_sf"/>
</dbReference>
<dbReference type="InterPro" id="IPR003509">
    <property type="entry name" value="UPF0102_YraN-like"/>
</dbReference>
<dbReference type="NCBIfam" id="NF009150">
    <property type="entry name" value="PRK12497.1-3"/>
    <property type="match status" value="1"/>
</dbReference>
<dbReference type="NCBIfam" id="TIGR00252">
    <property type="entry name" value="YraN family protein"/>
    <property type="match status" value="1"/>
</dbReference>
<dbReference type="PANTHER" id="PTHR34039">
    <property type="entry name" value="UPF0102 PROTEIN YRAN"/>
    <property type="match status" value="1"/>
</dbReference>
<dbReference type="PANTHER" id="PTHR34039:SF1">
    <property type="entry name" value="UPF0102 PROTEIN YRAN"/>
    <property type="match status" value="1"/>
</dbReference>
<dbReference type="Pfam" id="PF02021">
    <property type="entry name" value="UPF0102"/>
    <property type="match status" value="1"/>
</dbReference>
<dbReference type="SUPFAM" id="SSF52980">
    <property type="entry name" value="Restriction endonuclease-like"/>
    <property type="match status" value="1"/>
</dbReference>
<comment type="similarity">
    <text evidence="1">Belongs to the UPF0102 family.</text>
</comment>